<dbReference type="EC" id="3.4.-.-" evidence="1"/>
<dbReference type="EMBL" id="CP001401">
    <property type="protein sequence ID" value="ACP55383.1"/>
    <property type="molecule type" value="Genomic_DNA"/>
</dbReference>
<dbReference type="RefSeq" id="WP_012711449.1">
    <property type="nucleotide sequence ID" value="NC_012632.1"/>
</dbReference>
<dbReference type="SMR" id="C3N5V8"/>
<dbReference type="KEGG" id="sim:M1627_1501"/>
<dbReference type="HOGENOM" id="CLU_108521_2_0_2"/>
<dbReference type="Proteomes" id="UP000002307">
    <property type="component" value="Chromosome"/>
</dbReference>
<dbReference type="GO" id="GO:0008237">
    <property type="term" value="F:metallopeptidase activity"/>
    <property type="evidence" value="ECO:0007669"/>
    <property type="project" value="UniProtKB-UniRule"/>
</dbReference>
<dbReference type="GO" id="GO:0008270">
    <property type="term" value="F:zinc ion binding"/>
    <property type="evidence" value="ECO:0007669"/>
    <property type="project" value="UniProtKB-UniRule"/>
</dbReference>
<dbReference type="GO" id="GO:0006508">
    <property type="term" value="P:proteolysis"/>
    <property type="evidence" value="ECO:0007669"/>
    <property type="project" value="UniProtKB-UniRule"/>
</dbReference>
<dbReference type="CDD" id="cd11375">
    <property type="entry name" value="Peptidase_M54"/>
    <property type="match status" value="1"/>
</dbReference>
<dbReference type="Gene3D" id="3.40.390.10">
    <property type="entry name" value="Collagenase (Catalytic Domain)"/>
    <property type="match status" value="1"/>
</dbReference>
<dbReference type="HAMAP" id="MF_01842">
    <property type="entry name" value="Archaemetzincin"/>
    <property type="match status" value="1"/>
</dbReference>
<dbReference type="InterPro" id="IPR024079">
    <property type="entry name" value="MetalloPept_cat_dom_sf"/>
</dbReference>
<dbReference type="InterPro" id="IPR012962">
    <property type="entry name" value="Pept_M54_archaemetzincn"/>
</dbReference>
<dbReference type="InterPro" id="IPR012091">
    <property type="entry name" value="Pept_M54_archaemetzncn_arc/bac"/>
</dbReference>
<dbReference type="NCBIfam" id="NF033823">
    <property type="entry name" value="archmetzin"/>
    <property type="match status" value="1"/>
</dbReference>
<dbReference type="PANTHER" id="PTHR15910">
    <property type="entry name" value="ARCHAEMETZINCIN"/>
    <property type="match status" value="1"/>
</dbReference>
<dbReference type="PANTHER" id="PTHR15910:SF1">
    <property type="entry name" value="ARCHAEMETZINCIN-2"/>
    <property type="match status" value="1"/>
</dbReference>
<dbReference type="Pfam" id="PF07998">
    <property type="entry name" value="Peptidase_M54"/>
    <property type="match status" value="1"/>
</dbReference>
<dbReference type="PIRSF" id="PIRSF005785">
    <property type="entry name" value="Zn-prot_arch"/>
    <property type="match status" value="1"/>
</dbReference>
<dbReference type="SUPFAM" id="SSF55486">
    <property type="entry name" value="Metalloproteases ('zincins'), catalytic domain"/>
    <property type="match status" value="1"/>
</dbReference>
<evidence type="ECO:0000255" key="1">
    <source>
        <dbReference type="HAMAP-Rule" id="MF_01842"/>
    </source>
</evidence>
<feature type="chain" id="PRO_1000216096" description="Archaemetzincin">
    <location>
        <begin position="1"/>
        <end position="183"/>
    </location>
</feature>
<feature type="active site" description="Proton acceptor" evidence="1">
    <location>
        <position position="132"/>
    </location>
</feature>
<feature type="binding site" evidence="1">
    <location>
        <position position="131"/>
    </location>
    <ligand>
        <name>Zn(2+)</name>
        <dbReference type="ChEBI" id="CHEBI:29105"/>
        <label>1</label>
        <note>catalytic</note>
    </ligand>
</feature>
<feature type="binding site" evidence="1">
    <location>
        <position position="135"/>
    </location>
    <ligand>
        <name>Zn(2+)</name>
        <dbReference type="ChEBI" id="CHEBI:29105"/>
        <label>1</label>
        <note>catalytic</note>
    </ligand>
</feature>
<feature type="binding site" evidence="1">
    <location>
        <position position="141"/>
    </location>
    <ligand>
        <name>Zn(2+)</name>
        <dbReference type="ChEBI" id="CHEBI:29105"/>
        <label>1</label>
        <note>catalytic</note>
    </ligand>
</feature>
<feature type="binding site" evidence="1">
    <location>
        <position position="142"/>
    </location>
    <ligand>
        <name>Zn(2+)</name>
        <dbReference type="ChEBI" id="CHEBI:29105"/>
        <label>2</label>
    </ligand>
</feature>
<feature type="binding site" evidence="1">
    <location>
        <position position="147"/>
    </location>
    <ligand>
        <name>Zn(2+)</name>
        <dbReference type="ChEBI" id="CHEBI:29105"/>
        <label>2</label>
    </ligand>
</feature>
<feature type="binding site" evidence="1">
    <location>
        <position position="166"/>
    </location>
    <ligand>
        <name>Zn(2+)</name>
        <dbReference type="ChEBI" id="CHEBI:29105"/>
        <label>2</label>
    </ligand>
</feature>
<feature type="binding site" evidence="1">
    <location>
        <position position="169"/>
    </location>
    <ligand>
        <name>Zn(2+)</name>
        <dbReference type="ChEBI" id="CHEBI:29105"/>
        <label>2</label>
    </ligand>
</feature>
<accession>C3N5V8</accession>
<keyword id="KW-0378">Hydrolase</keyword>
<keyword id="KW-0479">Metal-binding</keyword>
<keyword id="KW-0482">Metalloprotease</keyword>
<keyword id="KW-0645">Protease</keyword>
<keyword id="KW-0862">Zinc</keyword>
<comment type="function">
    <text evidence="1">Probable zinc metalloprotease whose natural substrate is unknown.</text>
</comment>
<comment type="cofactor">
    <cofactor evidence="1">
        <name>Zn(2+)</name>
        <dbReference type="ChEBI" id="CHEBI:29105"/>
    </cofactor>
    <text evidence="1">Binds 2 Zn(2+) ions per subunit. One is catalytic, whereas the other seems to have a structural role.</text>
</comment>
<comment type="subunit">
    <text evidence="1">Monomer.</text>
</comment>
<comment type="similarity">
    <text evidence="1">Belongs to the peptidase M54 family.</text>
</comment>
<reference key="1">
    <citation type="journal article" date="2009" name="Proc. Natl. Acad. Sci. U.S.A.">
        <title>Biogeography of the Sulfolobus islandicus pan-genome.</title>
        <authorList>
            <person name="Reno M.L."/>
            <person name="Held N.L."/>
            <person name="Fields C.J."/>
            <person name="Burke P.V."/>
            <person name="Whitaker R.J."/>
        </authorList>
    </citation>
    <scope>NUCLEOTIDE SEQUENCE [LARGE SCALE GENOMIC DNA]</scope>
    <source>
        <strain>M.16.27</strain>
    </source>
</reference>
<sequence length="183" mass="21484">MTEMKILIVTLTYIEKSIIDEIVNNLSSYGLEVDILFDSRKYLPISAFNWERLQYDAEKVLSFLKSKYDFNYDSIIFLADSDGYIDGYNFVFGLTIDNFAIIFLNRLREEFYNRKPDLELFMKRVVKEVTHEAGHTLGLGHCNTIGCVMNFSNTVEDVDKKQARFCKNCIYKIENLSKYLQRK</sequence>
<protein>
    <recommendedName>
        <fullName evidence="1">Archaemetzincin</fullName>
        <ecNumber evidence="1">3.4.-.-</ecNumber>
    </recommendedName>
</protein>
<organism>
    <name type="scientific">Saccharolobus islandicus (strain M.16.27)</name>
    <name type="common">Sulfolobus islandicus</name>
    <dbReference type="NCBI Taxonomy" id="427318"/>
    <lineage>
        <taxon>Archaea</taxon>
        <taxon>Thermoproteota</taxon>
        <taxon>Thermoprotei</taxon>
        <taxon>Sulfolobales</taxon>
        <taxon>Sulfolobaceae</taxon>
        <taxon>Saccharolobus</taxon>
    </lineage>
</organism>
<gene>
    <name evidence="1" type="primary">amzA</name>
    <name type="ordered locus">M1627_1501</name>
</gene>
<proteinExistence type="inferred from homology"/>
<name>AMZA_SACI3</name>